<reference key="1">
    <citation type="journal article" date="2004" name="Proc. Natl. Acad. Sci. U.S.A.">
        <title>Complete genomes of two clinical Staphylococcus aureus strains: evidence for the rapid evolution of virulence and drug resistance.</title>
        <authorList>
            <person name="Holden M.T.G."/>
            <person name="Feil E.J."/>
            <person name="Lindsay J.A."/>
            <person name="Peacock S.J."/>
            <person name="Day N.P.J."/>
            <person name="Enright M.C."/>
            <person name="Foster T.J."/>
            <person name="Moore C.E."/>
            <person name="Hurst L."/>
            <person name="Atkin R."/>
            <person name="Barron A."/>
            <person name="Bason N."/>
            <person name="Bentley S.D."/>
            <person name="Chillingworth C."/>
            <person name="Chillingworth T."/>
            <person name="Churcher C."/>
            <person name="Clark L."/>
            <person name="Corton C."/>
            <person name="Cronin A."/>
            <person name="Doggett J."/>
            <person name="Dowd L."/>
            <person name="Feltwell T."/>
            <person name="Hance Z."/>
            <person name="Harris B."/>
            <person name="Hauser H."/>
            <person name="Holroyd S."/>
            <person name="Jagels K."/>
            <person name="James K.D."/>
            <person name="Lennard N."/>
            <person name="Line A."/>
            <person name="Mayes R."/>
            <person name="Moule S."/>
            <person name="Mungall K."/>
            <person name="Ormond D."/>
            <person name="Quail M.A."/>
            <person name="Rabbinowitsch E."/>
            <person name="Rutherford K.M."/>
            <person name="Sanders M."/>
            <person name="Sharp S."/>
            <person name="Simmonds M."/>
            <person name="Stevens K."/>
            <person name="Whitehead S."/>
            <person name="Barrell B.G."/>
            <person name="Spratt B.G."/>
            <person name="Parkhill J."/>
        </authorList>
    </citation>
    <scope>NUCLEOTIDE SEQUENCE [LARGE SCALE GENOMIC DNA]</scope>
    <source>
        <strain>MRSA252</strain>
    </source>
</reference>
<proteinExistence type="inferred from homology"/>
<dbReference type="EMBL" id="BX571856">
    <property type="protein sequence ID" value="CAG40097.1"/>
    <property type="molecule type" value="Genomic_DNA"/>
</dbReference>
<dbReference type="RefSeq" id="WP_001049150.1">
    <property type="nucleotide sequence ID" value="NC_002952.2"/>
</dbReference>
<dbReference type="SMR" id="Q6GHW4"/>
<dbReference type="KEGG" id="sar:SAR1095"/>
<dbReference type="HOGENOM" id="CLU_159890_2_1_9"/>
<dbReference type="Proteomes" id="UP000000596">
    <property type="component" value="Chromosome"/>
</dbReference>
<dbReference type="GO" id="GO:0005737">
    <property type="term" value="C:cytoplasm"/>
    <property type="evidence" value="ECO:0007669"/>
    <property type="project" value="UniProtKB-SubCell"/>
</dbReference>
<dbReference type="HAMAP" id="MF_01126">
    <property type="entry name" value="UPF0298"/>
    <property type="match status" value="1"/>
</dbReference>
<dbReference type="InterPro" id="IPR016979">
    <property type="entry name" value="DUF2129"/>
</dbReference>
<dbReference type="Pfam" id="PF09902">
    <property type="entry name" value="DUF2129"/>
    <property type="match status" value="1"/>
</dbReference>
<dbReference type="PIRSF" id="PIRSF031653">
    <property type="entry name" value="UCP031653"/>
    <property type="match status" value="1"/>
</dbReference>
<organism>
    <name type="scientific">Staphylococcus aureus (strain MRSA252)</name>
    <dbReference type="NCBI Taxonomy" id="282458"/>
    <lineage>
        <taxon>Bacteria</taxon>
        <taxon>Bacillati</taxon>
        <taxon>Bacillota</taxon>
        <taxon>Bacilli</taxon>
        <taxon>Bacillales</taxon>
        <taxon>Staphylococcaceae</taxon>
        <taxon>Staphylococcus</taxon>
    </lineage>
</organism>
<evidence type="ECO:0000255" key="1">
    <source>
        <dbReference type="HAMAP-Rule" id="MF_01126"/>
    </source>
</evidence>
<keyword id="KW-0963">Cytoplasm</keyword>
<accession>Q6GHW4</accession>
<sequence>MNLIPRTSIVVYLKHMKHERQIRKYGHIVHSNRDRKFVIMYVNEQDVDQIVHKLMQLKYVRHIDGSPYKYLKKTYEKEKHEIYN</sequence>
<name>Y1095_STAAR</name>
<gene>
    <name type="ordered locus">SAR1095</name>
</gene>
<feature type="chain" id="PRO_0000074666" description="UPF0298 protein SAR1095">
    <location>
        <begin position="1"/>
        <end position="84"/>
    </location>
</feature>
<protein>
    <recommendedName>
        <fullName evidence="1">UPF0298 protein SAR1095</fullName>
    </recommendedName>
</protein>
<comment type="subcellular location">
    <subcellularLocation>
        <location evidence="1">Cytoplasm</location>
    </subcellularLocation>
</comment>
<comment type="similarity">
    <text evidence="1">Belongs to the UPF0298 family.</text>
</comment>